<proteinExistence type="inferred from homology"/>
<feature type="chain" id="PRO_0000131983" description="Cytidylate kinase">
    <location>
        <begin position="1"/>
        <end position="231"/>
    </location>
</feature>
<feature type="binding site" evidence="1">
    <location>
        <begin position="18"/>
        <end position="26"/>
    </location>
    <ligand>
        <name>ATP</name>
        <dbReference type="ChEBI" id="CHEBI:30616"/>
    </ligand>
</feature>
<keyword id="KW-0067">ATP-binding</keyword>
<keyword id="KW-0963">Cytoplasm</keyword>
<keyword id="KW-0418">Kinase</keyword>
<keyword id="KW-0547">Nucleotide-binding</keyword>
<keyword id="KW-1185">Reference proteome</keyword>
<keyword id="KW-0808">Transferase</keyword>
<accession>Q9EWW6</accession>
<name>KCY_STRCO</name>
<comment type="catalytic activity">
    <reaction evidence="1">
        <text>CMP + ATP = CDP + ADP</text>
        <dbReference type="Rhea" id="RHEA:11600"/>
        <dbReference type="ChEBI" id="CHEBI:30616"/>
        <dbReference type="ChEBI" id="CHEBI:58069"/>
        <dbReference type="ChEBI" id="CHEBI:60377"/>
        <dbReference type="ChEBI" id="CHEBI:456216"/>
        <dbReference type="EC" id="2.7.4.25"/>
    </reaction>
</comment>
<comment type="catalytic activity">
    <reaction evidence="1">
        <text>dCMP + ATP = dCDP + ADP</text>
        <dbReference type="Rhea" id="RHEA:25094"/>
        <dbReference type="ChEBI" id="CHEBI:30616"/>
        <dbReference type="ChEBI" id="CHEBI:57566"/>
        <dbReference type="ChEBI" id="CHEBI:58593"/>
        <dbReference type="ChEBI" id="CHEBI:456216"/>
        <dbReference type="EC" id="2.7.4.25"/>
    </reaction>
</comment>
<comment type="subcellular location">
    <subcellularLocation>
        <location evidence="1">Cytoplasm</location>
    </subcellularLocation>
</comment>
<comment type="similarity">
    <text evidence="1">Belongs to the cytidylate kinase family. Type 1 subfamily.</text>
</comment>
<organism>
    <name type="scientific">Streptomyces coelicolor (strain ATCC BAA-471 / A3(2) / M145)</name>
    <dbReference type="NCBI Taxonomy" id="100226"/>
    <lineage>
        <taxon>Bacteria</taxon>
        <taxon>Bacillati</taxon>
        <taxon>Actinomycetota</taxon>
        <taxon>Actinomycetes</taxon>
        <taxon>Kitasatosporales</taxon>
        <taxon>Streptomycetaceae</taxon>
        <taxon>Streptomyces</taxon>
        <taxon>Streptomyces albidoflavus group</taxon>
    </lineage>
</organism>
<evidence type="ECO:0000255" key="1">
    <source>
        <dbReference type="HAMAP-Rule" id="MF_00238"/>
    </source>
</evidence>
<reference key="1">
    <citation type="journal article" date="2002" name="Nature">
        <title>Complete genome sequence of the model actinomycete Streptomyces coelicolor A3(2).</title>
        <authorList>
            <person name="Bentley S.D."/>
            <person name="Chater K.F."/>
            <person name="Cerdeno-Tarraga A.-M."/>
            <person name="Challis G.L."/>
            <person name="Thomson N.R."/>
            <person name="James K.D."/>
            <person name="Harris D.E."/>
            <person name="Quail M.A."/>
            <person name="Kieser H."/>
            <person name="Harper D."/>
            <person name="Bateman A."/>
            <person name="Brown S."/>
            <person name="Chandra G."/>
            <person name="Chen C.W."/>
            <person name="Collins M."/>
            <person name="Cronin A."/>
            <person name="Fraser A."/>
            <person name="Goble A."/>
            <person name="Hidalgo J."/>
            <person name="Hornsby T."/>
            <person name="Howarth S."/>
            <person name="Huang C.-H."/>
            <person name="Kieser T."/>
            <person name="Larke L."/>
            <person name="Murphy L.D."/>
            <person name="Oliver K."/>
            <person name="O'Neil S."/>
            <person name="Rabbinowitsch E."/>
            <person name="Rajandream M.A."/>
            <person name="Rutherford K.M."/>
            <person name="Rutter S."/>
            <person name="Seeger K."/>
            <person name="Saunders D."/>
            <person name="Sharp S."/>
            <person name="Squares R."/>
            <person name="Squares S."/>
            <person name="Taylor K."/>
            <person name="Warren T."/>
            <person name="Wietzorrek A."/>
            <person name="Woodward J.R."/>
            <person name="Barrell B.G."/>
            <person name="Parkhill J."/>
            <person name="Hopwood D.A."/>
        </authorList>
    </citation>
    <scope>NUCLEOTIDE SEQUENCE [LARGE SCALE GENOMIC DNA]</scope>
    <source>
        <strain>ATCC BAA-471 / A3(2) / M145</strain>
    </source>
</reference>
<dbReference type="EC" id="2.7.4.25" evidence="1"/>
<dbReference type="EMBL" id="AL939110">
    <property type="protein sequence ID" value="CAC12933.1"/>
    <property type="molecule type" value="Genomic_DNA"/>
</dbReference>
<dbReference type="RefSeq" id="NP_626032.1">
    <property type="nucleotide sequence ID" value="NC_003888.3"/>
</dbReference>
<dbReference type="RefSeq" id="WP_011027958.1">
    <property type="nucleotide sequence ID" value="NZ_VNID01000018.1"/>
</dbReference>
<dbReference type="SMR" id="Q9EWW6"/>
<dbReference type="FunCoup" id="Q9EWW6">
    <property type="interactions" value="47"/>
</dbReference>
<dbReference type="STRING" id="100226.gene:17759354"/>
<dbReference type="PaxDb" id="100226-SCO1760"/>
<dbReference type="GeneID" id="91387266"/>
<dbReference type="KEGG" id="sco:SCO1760"/>
<dbReference type="PATRIC" id="fig|100226.15.peg.1778"/>
<dbReference type="eggNOG" id="COG0283">
    <property type="taxonomic scope" value="Bacteria"/>
</dbReference>
<dbReference type="HOGENOM" id="CLU_079959_0_0_11"/>
<dbReference type="InParanoid" id="Q9EWW6"/>
<dbReference type="OrthoDB" id="9807434at2"/>
<dbReference type="PhylomeDB" id="Q9EWW6"/>
<dbReference type="Proteomes" id="UP000001973">
    <property type="component" value="Chromosome"/>
</dbReference>
<dbReference type="GO" id="GO:0005829">
    <property type="term" value="C:cytosol"/>
    <property type="evidence" value="ECO:0000318"/>
    <property type="project" value="GO_Central"/>
</dbReference>
<dbReference type="GO" id="GO:0004127">
    <property type="term" value="F:(d)CMP kinase activity"/>
    <property type="evidence" value="ECO:0000318"/>
    <property type="project" value="GO_Central"/>
</dbReference>
<dbReference type="GO" id="GO:0005524">
    <property type="term" value="F:ATP binding"/>
    <property type="evidence" value="ECO:0007669"/>
    <property type="project" value="UniProtKB-UniRule"/>
</dbReference>
<dbReference type="GO" id="GO:0036430">
    <property type="term" value="F:CMP kinase activity"/>
    <property type="evidence" value="ECO:0007669"/>
    <property type="project" value="RHEA"/>
</dbReference>
<dbReference type="GO" id="GO:0036431">
    <property type="term" value="F:dCMP kinase activity"/>
    <property type="evidence" value="ECO:0007669"/>
    <property type="project" value="RHEA"/>
</dbReference>
<dbReference type="GO" id="GO:0015949">
    <property type="term" value="P:nucleobase-containing small molecule interconversion"/>
    <property type="evidence" value="ECO:0000318"/>
    <property type="project" value="GO_Central"/>
</dbReference>
<dbReference type="GO" id="GO:0006220">
    <property type="term" value="P:pyrimidine nucleotide metabolic process"/>
    <property type="evidence" value="ECO:0007669"/>
    <property type="project" value="UniProtKB-UniRule"/>
</dbReference>
<dbReference type="CDD" id="cd02020">
    <property type="entry name" value="CMPK"/>
    <property type="match status" value="1"/>
</dbReference>
<dbReference type="FunFam" id="3.40.50.300:FF:001830">
    <property type="entry name" value="Cytidylate kinase"/>
    <property type="match status" value="1"/>
</dbReference>
<dbReference type="Gene3D" id="3.40.50.300">
    <property type="entry name" value="P-loop containing nucleotide triphosphate hydrolases"/>
    <property type="match status" value="1"/>
</dbReference>
<dbReference type="HAMAP" id="MF_00238">
    <property type="entry name" value="Cytidyl_kinase_type1"/>
    <property type="match status" value="1"/>
</dbReference>
<dbReference type="InterPro" id="IPR003136">
    <property type="entry name" value="Cytidylate_kin"/>
</dbReference>
<dbReference type="InterPro" id="IPR011994">
    <property type="entry name" value="Cytidylate_kinase_dom"/>
</dbReference>
<dbReference type="InterPro" id="IPR027417">
    <property type="entry name" value="P-loop_NTPase"/>
</dbReference>
<dbReference type="NCBIfam" id="TIGR00017">
    <property type="entry name" value="cmk"/>
    <property type="match status" value="1"/>
</dbReference>
<dbReference type="PANTHER" id="PTHR21299:SF2">
    <property type="entry name" value="CYTIDYLATE KINASE"/>
    <property type="match status" value="1"/>
</dbReference>
<dbReference type="PANTHER" id="PTHR21299">
    <property type="entry name" value="CYTIDYLATE KINASE/PANTOATE-BETA-ALANINE LIGASE"/>
    <property type="match status" value="1"/>
</dbReference>
<dbReference type="Pfam" id="PF02224">
    <property type="entry name" value="Cytidylate_kin"/>
    <property type="match status" value="1"/>
</dbReference>
<dbReference type="SUPFAM" id="SSF52540">
    <property type="entry name" value="P-loop containing nucleoside triphosphate hydrolases"/>
    <property type="match status" value="1"/>
</dbReference>
<protein>
    <recommendedName>
        <fullName evidence="1">Cytidylate kinase</fullName>
        <shortName evidence="1">CK</shortName>
        <ecNumber evidence="1">2.7.4.25</ecNumber>
    </recommendedName>
    <alternativeName>
        <fullName evidence="1">Cytidine monophosphate kinase</fullName>
        <shortName evidence="1">CMP kinase</shortName>
    </alternativeName>
</protein>
<gene>
    <name evidence="1" type="primary">cmk</name>
    <name type="ordered locus">SCO1760</name>
    <name type="ORF">2SCI34.13c</name>
</gene>
<sequence length="231" mass="23601">MENGAAPTAPAVIVAIDGPSGTGKSSTSKAVAAQLGLSYLDTGAQYRAITWWMVTNGIDTDDPHAVAAAAGKPEIVSGTDPAGPTITVDGVDVAGPIRTQEVTSKVSAVSAVPEVRARITELQRTIAAAAPLGIVVEGRDIGTTVLPDADLKIFLTASAEARAARRSGELKGADVHATREALIKRDAADSSRKTSPLAKAGDAVEVDTTALSLPQVIECVVTLVEEKRAGK</sequence>